<proteinExistence type="inferred from homology"/>
<dbReference type="EC" id="3.1.26.11" evidence="1"/>
<dbReference type="EMBL" id="CP000485">
    <property type="protein sequence ID" value="ABK86982.1"/>
    <property type="molecule type" value="Genomic_DNA"/>
</dbReference>
<dbReference type="RefSeq" id="WP_000397446.1">
    <property type="nucleotide sequence ID" value="NC_008600.1"/>
</dbReference>
<dbReference type="SMR" id="A0RID9"/>
<dbReference type="KEGG" id="btl:BALH_3755"/>
<dbReference type="HOGENOM" id="CLU_031317_2_0_9"/>
<dbReference type="GO" id="GO:0042781">
    <property type="term" value="F:3'-tRNA processing endoribonuclease activity"/>
    <property type="evidence" value="ECO:0007669"/>
    <property type="project" value="UniProtKB-UniRule"/>
</dbReference>
<dbReference type="GO" id="GO:0008270">
    <property type="term" value="F:zinc ion binding"/>
    <property type="evidence" value="ECO:0007669"/>
    <property type="project" value="UniProtKB-UniRule"/>
</dbReference>
<dbReference type="CDD" id="cd07717">
    <property type="entry name" value="RNaseZ_ZiPD-like_MBL-fold"/>
    <property type="match status" value="1"/>
</dbReference>
<dbReference type="FunFam" id="3.60.15.10:FF:000002">
    <property type="entry name" value="Ribonuclease Z"/>
    <property type="match status" value="1"/>
</dbReference>
<dbReference type="Gene3D" id="3.60.15.10">
    <property type="entry name" value="Ribonuclease Z/Hydroxyacylglutathione hydrolase-like"/>
    <property type="match status" value="1"/>
</dbReference>
<dbReference type="HAMAP" id="MF_01818">
    <property type="entry name" value="RNase_Z_BN"/>
    <property type="match status" value="1"/>
</dbReference>
<dbReference type="InterPro" id="IPR001279">
    <property type="entry name" value="Metallo-B-lactamas"/>
</dbReference>
<dbReference type="InterPro" id="IPR036866">
    <property type="entry name" value="RibonucZ/Hydroxyglut_hydro"/>
</dbReference>
<dbReference type="InterPro" id="IPR013471">
    <property type="entry name" value="RNase_Z/BN"/>
</dbReference>
<dbReference type="NCBIfam" id="NF000800">
    <property type="entry name" value="PRK00055.1-1"/>
    <property type="match status" value="1"/>
</dbReference>
<dbReference type="NCBIfam" id="NF000801">
    <property type="entry name" value="PRK00055.1-3"/>
    <property type="match status" value="1"/>
</dbReference>
<dbReference type="NCBIfam" id="TIGR02651">
    <property type="entry name" value="RNase_Z"/>
    <property type="match status" value="1"/>
</dbReference>
<dbReference type="PANTHER" id="PTHR46018">
    <property type="entry name" value="ZINC PHOSPHODIESTERASE ELAC PROTEIN 1"/>
    <property type="match status" value="1"/>
</dbReference>
<dbReference type="PANTHER" id="PTHR46018:SF2">
    <property type="entry name" value="ZINC PHOSPHODIESTERASE ELAC PROTEIN 1"/>
    <property type="match status" value="1"/>
</dbReference>
<dbReference type="Pfam" id="PF00753">
    <property type="entry name" value="Lactamase_B"/>
    <property type="match status" value="1"/>
</dbReference>
<dbReference type="Pfam" id="PF12706">
    <property type="entry name" value="Lactamase_B_2"/>
    <property type="match status" value="1"/>
</dbReference>
<dbReference type="SMART" id="SM00849">
    <property type="entry name" value="Lactamase_B"/>
    <property type="match status" value="1"/>
</dbReference>
<dbReference type="SUPFAM" id="SSF56281">
    <property type="entry name" value="Metallo-hydrolase/oxidoreductase"/>
    <property type="match status" value="1"/>
</dbReference>
<reference key="1">
    <citation type="journal article" date="2007" name="J. Bacteriol.">
        <title>The complete genome sequence of Bacillus thuringiensis Al Hakam.</title>
        <authorList>
            <person name="Challacombe J.F."/>
            <person name="Altherr M.R."/>
            <person name="Xie G."/>
            <person name="Bhotika S.S."/>
            <person name="Brown N."/>
            <person name="Bruce D."/>
            <person name="Campbell C.S."/>
            <person name="Campbell M.L."/>
            <person name="Chen J."/>
            <person name="Chertkov O."/>
            <person name="Cleland C."/>
            <person name="Dimitrijevic M."/>
            <person name="Doggett N.A."/>
            <person name="Fawcett J.J."/>
            <person name="Glavina T."/>
            <person name="Goodwin L.A."/>
            <person name="Green L.D."/>
            <person name="Han C.S."/>
            <person name="Hill K.K."/>
            <person name="Hitchcock P."/>
            <person name="Jackson P.J."/>
            <person name="Keim P."/>
            <person name="Kewalramani A.R."/>
            <person name="Longmire J."/>
            <person name="Lucas S."/>
            <person name="Malfatti S."/>
            <person name="Martinez D."/>
            <person name="McMurry K."/>
            <person name="Meincke L.J."/>
            <person name="Misra M."/>
            <person name="Moseman B.L."/>
            <person name="Mundt M."/>
            <person name="Munk A.C."/>
            <person name="Okinaka R.T."/>
            <person name="Parson-Quintana B."/>
            <person name="Reilly L.P."/>
            <person name="Richardson P."/>
            <person name="Robinson D.L."/>
            <person name="Saunders E."/>
            <person name="Tapia R."/>
            <person name="Tesmer J.G."/>
            <person name="Thayer N."/>
            <person name="Thompson L.S."/>
            <person name="Tice H."/>
            <person name="Ticknor L.O."/>
            <person name="Wills P.L."/>
            <person name="Gilna P."/>
            <person name="Brettin T.S."/>
        </authorList>
    </citation>
    <scope>NUCLEOTIDE SEQUENCE [LARGE SCALE GENOMIC DNA]</scope>
    <source>
        <strain>Al Hakam</strain>
    </source>
</reference>
<protein>
    <recommendedName>
        <fullName evidence="1">Ribonuclease Z</fullName>
        <shortName evidence="1">RNase Z</shortName>
        <ecNumber evidence="1">3.1.26.11</ecNumber>
    </recommendedName>
    <alternativeName>
        <fullName evidence="1">tRNA 3 endonuclease</fullName>
    </alternativeName>
    <alternativeName>
        <fullName evidence="1">tRNase Z</fullName>
    </alternativeName>
</protein>
<organism>
    <name type="scientific">Bacillus thuringiensis (strain Al Hakam)</name>
    <dbReference type="NCBI Taxonomy" id="412694"/>
    <lineage>
        <taxon>Bacteria</taxon>
        <taxon>Bacillati</taxon>
        <taxon>Bacillota</taxon>
        <taxon>Bacilli</taxon>
        <taxon>Bacillales</taxon>
        <taxon>Bacillaceae</taxon>
        <taxon>Bacillus</taxon>
        <taxon>Bacillus cereus group</taxon>
    </lineage>
</organism>
<gene>
    <name evidence="1" type="primary">rnz</name>
    <name type="ordered locus">BALH_3755</name>
</gene>
<keyword id="KW-0255">Endonuclease</keyword>
<keyword id="KW-0378">Hydrolase</keyword>
<keyword id="KW-0479">Metal-binding</keyword>
<keyword id="KW-0540">Nuclease</keyword>
<keyword id="KW-0819">tRNA processing</keyword>
<keyword id="KW-0862">Zinc</keyword>
<feature type="chain" id="PRO_1000070263" description="Ribonuclease Z">
    <location>
        <begin position="1"/>
        <end position="307"/>
    </location>
</feature>
<feature type="active site" description="Proton acceptor" evidence="1">
    <location>
        <position position="67"/>
    </location>
</feature>
<feature type="binding site" evidence="1">
    <location>
        <position position="63"/>
    </location>
    <ligand>
        <name>Zn(2+)</name>
        <dbReference type="ChEBI" id="CHEBI:29105"/>
        <label>1</label>
        <note>catalytic</note>
    </ligand>
</feature>
<feature type="binding site" evidence="1">
    <location>
        <position position="65"/>
    </location>
    <ligand>
        <name>Zn(2+)</name>
        <dbReference type="ChEBI" id="CHEBI:29105"/>
        <label>1</label>
        <note>catalytic</note>
    </ligand>
</feature>
<feature type="binding site" evidence="1">
    <location>
        <position position="67"/>
    </location>
    <ligand>
        <name>Zn(2+)</name>
        <dbReference type="ChEBI" id="CHEBI:29105"/>
        <label>2</label>
        <note>catalytic</note>
    </ligand>
</feature>
<feature type="binding site" evidence="1">
    <location>
        <position position="68"/>
    </location>
    <ligand>
        <name>Zn(2+)</name>
        <dbReference type="ChEBI" id="CHEBI:29105"/>
        <label>2</label>
        <note>catalytic</note>
    </ligand>
</feature>
<feature type="binding site" evidence="1">
    <location>
        <position position="141"/>
    </location>
    <ligand>
        <name>Zn(2+)</name>
        <dbReference type="ChEBI" id="CHEBI:29105"/>
        <label>1</label>
        <note>catalytic</note>
    </ligand>
</feature>
<feature type="binding site" evidence="1">
    <location>
        <position position="212"/>
    </location>
    <ligand>
        <name>Zn(2+)</name>
        <dbReference type="ChEBI" id="CHEBI:29105"/>
        <label>1</label>
        <note>catalytic</note>
    </ligand>
</feature>
<feature type="binding site" evidence="1">
    <location>
        <position position="212"/>
    </location>
    <ligand>
        <name>Zn(2+)</name>
        <dbReference type="ChEBI" id="CHEBI:29105"/>
        <label>2</label>
        <note>catalytic</note>
    </ligand>
</feature>
<feature type="binding site" evidence="1">
    <location>
        <position position="270"/>
    </location>
    <ligand>
        <name>Zn(2+)</name>
        <dbReference type="ChEBI" id="CHEBI:29105"/>
        <label>2</label>
        <note>catalytic</note>
    </ligand>
</feature>
<name>RNZ_BACAH</name>
<accession>A0RID9</accession>
<comment type="function">
    <text evidence="1">Zinc phosphodiesterase, which displays some tRNA 3'-processing endonuclease activity. Probably involved in tRNA maturation, by removing a 3'-trailer from precursor tRNA.</text>
</comment>
<comment type="catalytic activity">
    <reaction evidence="1">
        <text>Endonucleolytic cleavage of RNA, removing extra 3' nucleotides from tRNA precursor, generating 3' termini of tRNAs. A 3'-hydroxy group is left at the tRNA terminus and a 5'-phosphoryl group is left at the trailer molecule.</text>
        <dbReference type="EC" id="3.1.26.11"/>
    </reaction>
</comment>
<comment type="cofactor">
    <cofactor evidence="1">
        <name>Zn(2+)</name>
        <dbReference type="ChEBI" id="CHEBI:29105"/>
    </cofactor>
    <text evidence="1">Binds 2 Zn(2+) ions.</text>
</comment>
<comment type="subunit">
    <text evidence="1">Homodimer.</text>
</comment>
<comment type="similarity">
    <text evidence="1">Belongs to the RNase Z family.</text>
</comment>
<evidence type="ECO:0000255" key="1">
    <source>
        <dbReference type="HAMAP-Rule" id="MF_01818"/>
    </source>
</evidence>
<sequence length="307" mass="34199">MEFVFLGTGAGVPSKGRNVSAIALQLLEERGQTWLFDCGEATQHQILHTSVRPRRIEKIFITHLHGDHIFGLPGLLGSRSFQGGTTPLTVYGPKGIKQFIEVALSVSTTHVKYPLEIVEITEEGTVFEDNEFHVETKRLSHGIECFGYRIIEKDIQGALLVDKLLEMGVKPGPLFKRLKDGEVVELENGTILNGNDFIGPPQKGRVITILGDTRYCEASRELAQDADVLVHEATFAAEDEQQAYDYFHSTSKQAASIALQANAKRLILTHISSRYQGDTYKELLKEARELFSNTEIATDLKSFPVDR</sequence>